<proteinExistence type="inferred from homology"/>
<dbReference type="EC" id="2.7.2.3" evidence="1"/>
<dbReference type="EMBL" id="CP000909">
    <property type="protein sequence ID" value="ABY36022.1"/>
    <property type="molecule type" value="Genomic_DNA"/>
</dbReference>
<dbReference type="RefSeq" id="WP_012258675.1">
    <property type="nucleotide sequence ID" value="NC_010175.1"/>
</dbReference>
<dbReference type="RefSeq" id="YP_001636411.1">
    <property type="nucleotide sequence ID" value="NC_010175.1"/>
</dbReference>
<dbReference type="SMR" id="A9WKE4"/>
<dbReference type="FunCoup" id="A9WKE4">
    <property type="interactions" value="426"/>
</dbReference>
<dbReference type="STRING" id="324602.Caur_2821"/>
<dbReference type="EnsemblBacteria" id="ABY36022">
    <property type="protein sequence ID" value="ABY36022"/>
    <property type="gene ID" value="Caur_2821"/>
</dbReference>
<dbReference type="KEGG" id="cau:Caur_2821"/>
<dbReference type="PATRIC" id="fig|324602.8.peg.3176"/>
<dbReference type="eggNOG" id="COG0126">
    <property type="taxonomic scope" value="Bacteria"/>
</dbReference>
<dbReference type="HOGENOM" id="CLU_025427_0_2_0"/>
<dbReference type="InParanoid" id="A9WKE4"/>
<dbReference type="UniPathway" id="UPA00109">
    <property type="reaction ID" value="UER00185"/>
</dbReference>
<dbReference type="Proteomes" id="UP000002008">
    <property type="component" value="Chromosome"/>
</dbReference>
<dbReference type="GO" id="GO:0005829">
    <property type="term" value="C:cytosol"/>
    <property type="evidence" value="ECO:0000318"/>
    <property type="project" value="GO_Central"/>
</dbReference>
<dbReference type="GO" id="GO:0043531">
    <property type="term" value="F:ADP binding"/>
    <property type="evidence" value="ECO:0000318"/>
    <property type="project" value="GO_Central"/>
</dbReference>
<dbReference type="GO" id="GO:0005524">
    <property type="term" value="F:ATP binding"/>
    <property type="evidence" value="ECO:0000318"/>
    <property type="project" value="GO_Central"/>
</dbReference>
<dbReference type="GO" id="GO:0004618">
    <property type="term" value="F:phosphoglycerate kinase activity"/>
    <property type="evidence" value="ECO:0000318"/>
    <property type="project" value="GO_Central"/>
</dbReference>
<dbReference type="GO" id="GO:0006094">
    <property type="term" value="P:gluconeogenesis"/>
    <property type="evidence" value="ECO:0000318"/>
    <property type="project" value="GO_Central"/>
</dbReference>
<dbReference type="GO" id="GO:0006096">
    <property type="term" value="P:glycolytic process"/>
    <property type="evidence" value="ECO:0000318"/>
    <property type="project" value="GO_Central"/>
</dbReference>
<dbReference type="CDD" id="cd00318">
    <property type="entry name" value="Phosphoglycerate_kinase"/>
    <property type="match status" value="1"/>
</dbReference>
<dbReference type="FunFam" id="3.40.50.1260:FF:000002">
    <property type="entry name" value="Phosphoglycerate kinase"/>
    <property type="match status" value="1"/>
</dbReference>
<dbReference type="FunFam" id="3.40.50.1260:FF:000007">
    <property type="entry name" value="Phosphoglycerate kinase"/>
    <property type="match status" value="1"/>
</dbReference>
<dbReference type="Gene3D" id="3.40.50.1260">
    <property type="entry name" value="Phosphoglycerate kinase, N-terminal domain"/>
    <property type="match status" value="2"/>
</dbReference>
<dbReference type="HAMAP" id="MF_00145">
    <property type="entry name" value="Phosphoglyc_kinase"/>
    <property type="match status" value="1"/>
</dbReference>
<dbReference type="InterPro" id="IPR001576">
    <property type="entry name" value="Phosphoglycerate_kinase"/>
</dbReference>
<dbReference type="InterPro" id="IPR015824">
    <property type="entry name" value="Phosphoglycerate_kinase_N"/>
</dbReference>
<dbReference type="InterPro" id="IPR036043">
    <property type="entry name" value="Phosphoglycerate_kinase_sf"/>
</dbReference>
<dbReference type="PANTHER" id="PTHR11406">
    <property type="entry name" value="PHOSPHOGLYCERATE KINASE"/>
    <property type="match status" value="1"/>
</dbReference>
<dbReference type="PANTHER" id="PTHR11406:SF23">
    <property type="entry name" value="PHOSPHOGLYCERATE KINASE 1, CHLOROPLASTIC-RELATED"/>
    <property type="match status" value="1"/>
</dbReference>
<dbReference type="Pfam" id="PF00162">
    <property type="entry name" value="PGK"/>
    <property type="match status" value="1"/>
</dbReference>
<dbReference type="PIRSF" id="PIRSF000724">
    <property type="entry name" value="Pgk"/>
    <property type="match status" value="1"/>
</dbReference>
<dbReference type="PRINTS" id="PR00477">
    <property type="entry name" value="PHGLYCKINASE"/>
</dbReference>
<dbReference type="SUPFAM" id="SSF53748">
    <property type="entry name" value="Phosphoglycerate kinase"/>
    <property type="match status" value="1"/>
</dbReference>
<feature type="chain" id="PRO_1000076582" description="Phosphoglycerate kinase">
    <location>
        <begin position="1"/>
        <end position="400"/>
    </location>
</feature>
<feature type="binding site" evidence="1">
    <location>
        <begin position="21"/>
        <end position="23"/>
    </location>
    <ligand>
        <name>substrate</name>
    </ligand>
</feature>
<feature type="binding site" evidence="1">
    <location>
        <position position="37"/>
    </location>
    <ligand>
        <name>substrate</name>
    </ligand>
</feature>
<feature type="binding site" evidence="1">
    <location>
        <begin position="60"/>
        <end position="63"/>
    </location>
    <ligand>
        <name>substrate</name>
    </ligand>
</feature>
<feature type="binding site" evidence="1">
    <location>
        <position position="121"/>
    </location>
    <ligand>
        <name>substrate</name>
    </ligand>
</feature>
<feature type="binding site" evidence="1">
    <location>
        <position position="154"/>
    </location>
    <ligand>
        <name>substrate</name>
    </ligand>
</feature>
<feature type="binding site" evidence="1">
    <location>
        <position position="204"/>
    </location>
    <ligand>
        <name>ATP</name>
        <dbReference type="ChEBI" id="CHEBI:30616"/>
    </ligand>
</feature>
<feature type="binding site" evidence="1">
    <location>
        <position position="326"/>
    </location>
    <ligand>
        <name>ATP</name>
        <dbReference type="ChEBI" id="CHEBI:30616"/>
    </ligand>
</feature>
<feature type="binding site" evidence="1">
    <location>
        <begin position="355"/>
        <end position="358"/>
    </location>
    <ligand>
        <name>ATP</name>
        <dbReference type="ChEBI" id="CHEBI:30616"/>
    </ligand>
</feature>
<comment type="catalytic activity">
    <reaction evidence="1">
        <text>(2R)-3-phosphoglycerate + ATP = (2R)-3-phospho-glyceroyl phosphate + ADP</text>
        <dbReference type="Rhea" id="RHEA:14801"/>
        <dbReference type="ChEBI" id="CHEBI:30616"/>
        <dbReference type="ChEBI" id="CHEBI:57604"/>
        <dbReference type="ChEBI" id="CHEBI:58272"/>
        <dbReference type="ChEBI" id="CHEBI:456216"/>
        <dbReference type="EC" id="2.7.2.3"/>
    </reaction>
</comment>
<comment type="pathway">
    <text evidence="1">Carbohydrate degradation; glycolysis; pyruvate from D-glyceraldehyde 3-phosphate: step 2/5.</text>
</comment>
<comment type="subunit">
    <text evidence="1">Monomer.</text>
</comment>
<comment type="subcellular location">
    <subcellularLocation>
        <location evidence="1">Cytoplasm</location>
    </subcellularLocation>
</comment>
<comment type="similarity">
    <text evidence="1">Belongs to the phosphoglycerate kinase family.</text>
</comment>
<accession>A9WKE4</accession>
<sequence length="400" mass="42310">MNKKTIRDVDWAGKRALVRVDFNVPLDDQGQITDDTRIRAALPTIRYLLEHGASVVLMSHLGRPKGKPNPKYSLRPVVERLFELLPEAKEVKKTEAITGPAAEAAVAMLKPGQVLVLENTRFDPREEPNDPAMAAELAKLGDVFVNDAFGTAHRANASTEGVAHYLPAVAGFLMEKELTYIGGALNNPQRPFVTVIGGAKISDKIGVIENLLGKVDALLIGGGMANTFLLAKGLNVGDSLVEPDSVPVAQQLMARAEERGARLLLPVDVVIADAFSADAQRQVVDVSDIPAGWRVLDIGPKTIERYSAEIRAARTVIWNGPMGVFELEPFAVGTRAIAQAMAEAAANGAITIVGGGDSVAAVEQAGLADKMSHVSTGGGASLELLEGRVLPGVAALQDAE</sequence>
<gene>
    <name evidence="1" type="primary">pgk</name>
    <name type="ordered locus">Caur_2821</name>
</gene>
<organism>
    <name type="scientific">Chloroflexus aurantiacus (strain ATCC 29366 / DSM 635 / J-10-fl)</name>
    <dbReference type="NCBI Taxonomy" id="324602"/>
    <lineage>
        <taxon>Bacteria</taxon>
        <taxon>Bacillati</taxon>
        <taxon>Chloroflexota</taxon>
        <taxon>Chloroflexia</taxon>
        <taxon>Chloroflexales</taxon>
        <taxon>Chloroflexineae</taxon>
        <taxon>Chloroflexaceae</taxon>
        <taxon>Chloroflexus</taxon>
    </lineage>
</organism>
<evidence type="ECO:0000255" key="1">
    <source>
        <dbReference type="HAMAP-Rule" id="MF_00145"/>
    </source>
</evidence>
<keyword id="KW-0067">ATP-binding</keyword>
<keyword id="KW-0963">Cytoplasm</keyword>
<keyword id="KW-0324">Glycolysis</keyword>
<keyword id="KW-0418">Kinase</keyword>
<keyword id="KW-0547">Nucleotide-binding</keyword>
<keyword id="KW-1185">Reference proteome</keyword>
<keyword id="KW-0808">Transferase</keyword>
<protein>
    <recommendedName>
        <fullName evidence="1">Phosphoglycerate kinase</fullName>
        <ecNumber evidence="1">2.7.2.3</ecNumber>
    </recommendedName>
</protein>
<name>PGK_CHLAA</name>
<reference key="1">
    <citation type="journal article" date="2011" name="BMC Genomics">
        <title>Complete genome sequence of the filamentous anoxygenic phototrophic bacterium Chloroflexus aurantiacus.</title>
        <authorList>
            <person name="Tang K.H."/>
            <person name="Barry K."/>
            <person name="Chertkov O."/>
            <person name="Dalin E."/>
            <person name="Han C.S."/>
            <person name="Hauser L.J."/>
            <person name="Honchak B.M."/>
            <person name="Karbach L.E."/>
            <person name="Land M.L."/>
            <person name="Lapidus A."/>
            <person name="Larimer F.W."/>
            <person name="Mikhailova N."/>
            <person name="Pitluck S."/>
            <person name="Pierson B.K."/>
            <person name="Blankenship R.E."/>
        </authorList>
    </citation>
    <scope>NUCLEOTIDE SEQUENCE [LARGE SCALE GENOMIC DNA]</scope>
    <source>
        <strain>ATCC 29366 / DSM 635 / J-10-fl</strain>
    </source>
</reference>